<sequence length="3931" mass="430359">MSGILDRCTCTPNARVFVAEGQVYCTRCLSARSLLPLNLQVPELGVLGLFYRPEEPLRWTLPRAFPTVECSPAGACWLSAIFPIARMTSGNLNFQQRMVRVAAEIYRAGQLTPTVLKTLQVYERGCRWYPIVGPVPGVGVYANSLHVSDKPFPGATHVLTNLPLPQRPKPEDFCPFECAMADVYDIGRGAVMYVAGGKVSWAPRGGNEVKFEPIPKELKLVANRLHTSFPPHHVVDMSRFTFMTPGSGVSMRVEYQHGCLPADTVPEGNCWWRLFDSLPPEVQYKEIRHANQFGYQTKHGVPGKYLQRRLQVNGLRAVTDTHGPIVIQYFSVKESWIRHLKLVEEPSLPGFEDLLRIRVEPNTSPLAGKDEKIFRFGSHKWYGAGKRARKPRSGATTMVAHHASSAHETRQATKHEGAGANKAEHLKRYSPPAEGNCGWHCISAIANRMVNSNFETTLPERVRPSDDWATDEDLVNTIQILRLPAALDRNGACGSAKYVLKLEGEHWTVSVIPGMSPTLLPLECVQGCCEHKGGLVSPDAVEISGFDPACLDRLAKVMHLPSSTIPAALAELSDDSNRPVSPAATTWTVSQFYARHRGGDHHDQVCLGKIISLCQVIEDCCCHQNKTNRATPEEVAAKIDQYLRGATSLEECLAKLERVSPPSAADTSFDWNVVLPGVEAANQTTEQPHVNSCCTLVPPVTQEPLGKDSVPLTAFSLSNCYYPAQGDEVHHRERLNSVLSKLEEVVLEEYGLMSTGLGPRPVLPSGLDELKDQMEEDLLKLANTQATSEMMAWAAEQVDLKAWVKSYPRWTPPPPPPRVQPRRTKSVKSLPEGKPVPAPRRKVRSDCGSPVLMGDNVPNGSEETVGGPLNFPTPSEPMTPMSEPVLVPASRRVPKLMTPLSGSAPVPAPRRTVTTTLTHQDEPLDLSASSQTEYEAFPLAPSQNMGILEAGGQEVEEVLSEISDILNDTNPAPVSSSSSLSSVKITRPKYSAQAIIDSGGPCSGHLQKEKEACLSIMREACDASKLGDPATQEWLSRMWDRVDMLTWRNTSAYQAFRILNGRFEFLPKMILETPPPHPCGFVMLPRTPAPSVSAESDLTIGSVATEDVPRILGKIGDTDELLDRGPSAPSKGEPVCDQPAKDPRMSPRESDESMIAPPADTGGVGSFTDLPSSDGVDVDGGGPLRTVKTKAGRLLDQLSCQVFSLVSHLPIFFSHLFKSDSGYSPGDWGFAAFTLFCLFLCYSYPFFGFAPLLGVFSGSSRRVRMGVFGCWLAFAVGLFKPVSDPVGTACEFDSPECRNVLHSFELLKPWDPVRSLVVGPVGLGLAILGRLLGGARYIWHFLLRLGIVADCILAGAYVLSQGRCKKCWGSCVRTAPNEIAFNVFPFTRATRSSLIDLCDRFCAPKGMDPIFLATGWRGCWTGRSPIEQPSEKPIAFAQLDEKRITARTVVAQPYDPNQAVKCLRVLQAGGAMVAEAVPKVVKVSAIPFRAPFFPAGVKVDPECRIVVDPDTFTTALRSGYSTANLVLGTGDFAQLNGLKIRQISKPSGGGPHLIAALHVACSMALHMLAGVYVTAVGSCGTGTNDPWCTNPFAVPGYGPGSLCTSRLCISQHGLTLPLTALVAGFGLQEIALVVLIFVSIGGMAHRLSCKADMLCILLAIASYVWVPLTWLLCVFPCWLRWFSLHPLTILWLVFFLISVNIPSGILAVVLLVSLWLLGRYTNIAGLVTPYDIHHYTSGPRGVAALATAPDGTYLAAVRRAALTGRTMLFTPSQLGSLLEGAFRTQKPSLNTVNVVGSSMGSGGVFTIDGKIKCVTAAHVLTGNSARVSGVGFNQMLDFDVKGDFAIADCPNWQGVAPKAQFCEDGWTGRAYWLTSSGVEPGVIGNGFAFCFTACGDSGSPVITEAGELVGVHTGSNKQGGGIVTRPSGQFCNVKPIKLSELSEFFAGPKVPLGDVKIGSHIIKDTCEVPSDLCALLAAKPELEGGLSTVQLLCVFFLLWRMMGHAWTPLVAVGFFILNEILPAVLVRSVFSFGMFVLSWLTPWSAQVLMIRLLTAALNRNRWSLGFYSLGAVTSFVADLAVTQGHPLQVVMNLSTYAFLPRMMVVTSPVPVIACGVVHLLAIILYLFKYRCLHNVLVGDGVFSSAFFLRYFAEGKLREGVSQSCGMSHESLTGALAMRLTDEDLDFLTKWTDFKCFVSASNMRNAAGQFIEAAYAKALRIELAQLVQVDKVRGTMAKLEAFADTVAPQLSPGDIVVALGHTPVGSIFDLKVGSTKHTLQAIETRVLAGSKMTVARVVDPTPAPPPVPVPIPLPPKVLENGPNAWGDEDRLSKKKRRRMEAVGIFVMDGKKYQKFWDKNSGDVFYEEVHISTDEWECLRTGDPVDFDPETGIQCGHITIEDKVYNVFTSPSGRRFLVPANPENRRAQWEAAKLSVEQALGMMNVDGELTAKELEKLKRIIDKLQGLTKEQCLNCLLAASGLTRCGRGGLVVTETAVKIVKFHNRTFTLGPVNLKVASEVELKDAVEHNQHPVARPVDGGVVLLRSAVPSLIDVLISGADASPKLLARHGPGNTGIDGTLWDFEAEATKEEVALSAQIIQACDIRRGDAPEIGLPYKLYPVRGNPERVKGVLQNTRFGDIPYKTPSDTGSPVHAAACLTPNATPVTDGRSVLATTMPSGFELYVPTIPASVLDYLDSRPDCPKQLTEHGCEDAALRDLSKYDLSTQGFVLPGVLRLVRKYLFAHVGKCPPVHRPSTYPAKNSMAGINGNRFPTKDIQSVPEIDVLCAQAVRENWQTVTPCTLKKQYCGKKKTRTILGTNNFIALAHRAALSGVTQGFMKKAFNSPIALGKNKFKELQAPVLGRCLEADLASCDRSTPAIVRWFAANLLYELACAEEHLPSYVLNCCHDLLVTQSGAVTKRGGLSSGDPITSVSNTIYSLVIYAQHMVLSYFKSGHPHGLLFLQDQLKFEDMLKVQPLIVYSDDLVLYAESPSMPNYHWWVEHLNLMLGFQTDPKKTTITDSPSFLGCRIINGRQLVPNRDRILAALAYHMKASNVSEYYASAAAILMDSCACLEYDPEWFEELVVGIAQCARKDGYSFPGPPFFLSMWEKLRSNHEGKKSRMCGYCGAPAPYATACGLDVCVYHTHFHQHCPVIIWCGHPAGSGSCSECEPPLGKGTSPLDEVLEQVPYKPPRTVIMHVEQGLTPLDPGRYQTRRGLVSVRRGIRGNEVDLPDGDYASTALLPTCKEINMVAVASNVLRSRFIIGPPGAGKTHWLLQQVQDGDVIYTPTHQTMLDMIRALGTCRFNVPAGTTLQFPAPSRTGPWVRILAGGWCPGKNSFLDEAAYCNHLDVLRLLSKTTLTCLGDFKQLHPVGFDSHCYVFDIMPQTQLKTIWRFGQNICDAIQPDYRDKLMSMVNTTRVTYVEKPVRYGQVLTPYHRDREDGAITIDSSQGATFDVVTLHLPTKDSLNRQRALVAITRARHAIFVYDPHRQLQSMFDLPAKGTPVNLAVHRDEQLIVLDRNNREITVAQALGNGDKFRATDKRVVDSLRAICADLEGSSSPLPKVAHNLGFYFSPDLTQFAKLPVELAPHWPVVTTQNNERWPDRLVASLRPIHKYSRACIGAGYMVGPSVFLGTPGVVSYYLTKFVRGEAQVLPETVFSTGRIEVDCREYLDDREREVAESLPHAFIGDVKGTTVGGCHHVTSKYLPRFLPKESVAVVGVSSPGKAAKAVCTLTDVYLPDLEAYLHPETQSRCWKVMLDFKEVRLMVWKDKTAYFQLEGRHFTWYQLASYASYIRVPVNSTVYLDPCMGPALCNRRVVGSTHWGADLAVTPYDYGAKIILSSAYHGEMPPGYKILACAEFSLDDPVRYKHTWGFESDTAYLYEFTGNGEDWEDYNDAFRARQKGKIYKANATSMRFHFPPGPVIEPTLGLN</sequence>
<keyword id="KW-1072">Activation of host autophagy by virus</keyword>
<keyword id="KW-0067">ATP-binding</keyword>
<keyword id="KW-0255">Endonuclease</keyword>
<keyword id="KW-0347">Helicase</keyword>
<keyword id="KW-1035">Host cytoplasm</keyword>
<keyword id="KW-1038">Host endoplasmic reticulum</keyword>
<keyword id="KW-1043">Host membrane</keyword>
<keyword id="KW-1048">Host nucleus</keyword>
<keyword id="KW-0945">Host-virus interaction</keyword>
<keyword id="KW-0378">Hydrolase</keyword>
<keyword id="KW-1090">Inhibition of host innate immune response by virus</keyword>
<keyword id="KW-1114">Inhibition of host interferon signaling pathway by virus</keyword>
<keyword id="KW-1095">Inhibition of host ISG15 by virus</keyword>
<keyword id="KW-1100">Inhibition of host NF-kappa-B by virus</keyword>
<keyword id="KW-1102">Inhibition of host PKR by virus</keyword>
<keyword id="KW-1105">Inhibition of host STAT1 by virus</keyword>
<keyword id="KW-0922">Interferon antiviral system evasion</keyword>
<keyword id="KW-0456">Lyase</keyword>
<keyword id="KW-0472">Membrane</keyword>
<keyword id="KW-0479">Metal-binding</keyword>
<keyword id="KW-1127">Modulation of host ubiquitin pathway by viral deubiquitinase</keyword>
<keyword id="KW-1130">Modulation of host ubiquitin pathway by virus</keyword>
<keyword id="KW-0511">Multifunctional enzyme</keyword>
<keyword id="KW-0540">Nuclease</keyword>
<keyword id="KW-0547">Nucleotide-binding</keyword>
<keyword id="KW-0548">Nucleotidyltransferase</keyword>
<keyword id="KW-0645">Protease</keyword>
<keyword id="KW-0688">Ribosomal frameshifting</keyword>
<keyword id="KW-0696">RNA-directed RNA polymerase</keyword>
<keyword id="KW-0720">Serine protease</keyword>
<keyword id="KW-0788">Thiol protease</keyword>
<keyword id="KW-0808">Transferase</keyword>
<keyword id="KW-0812">Transmembrane</keyword>
<keyword id="KW-1133">Transmembrane helix</keyword>
<keyword id="KW-0899">Viral immunoevasion</keyword>
<keyword id="KW-0693">Viral RNA replication</keyword>
<keyword id="KW-0862">Zinc</keyword>
<keyword id="KW-0863">Zinc-finger</keyword>
<proteinExistence type="evidence at protein level"/>
<organism>
    <name type="scientific">Porcine reproductive and respiratory syndrome virus</name>
    <name type="common">PRRSV</name>
    <dbReference type="NCBI Taxonomy" id="28344"/>
    <lineage>
        <taxon>Viruses</taxon>
        <taxon>Riboviria</taxon>
        <taxon>Orthornavirae</taxon>
        <taxon>Pisuviricota</taxon>
        <taxon>Pisoniviricetes</taxon>
        <taxon>Nidovirales</taxon>
        <taxon>Arnidovirineae</taxon>
        <taxon>Arteriviridae</taxon>
        <taxon>Variarterivirinae</taxon>
        <taxon>Betaarterivirus</taxon>
        <taxon>Ampobartevirus</taxon>
        <taxon>Betaarterivirus americense</taxon>
    </lineage>
</organism>
<comment type="function">
    <molecule>Replicase polyprotein 1ab</molecule>
    <text>Contains the activities necessary for the transcription of negative stranded RNA, leader RNA, subgenomic mRNAs and progeny virion RNA as well as proteinases responsible for the cleavage of the polyprotein into functional products.</text>
</comment>
<comment type="function">
    <molecule>Nsp1-alpha papain-like cysteine proteinase</molecule>
    <text evidence="5">Inhibits host IFN-beta production. Plays a role in the degradation of the host transcriptional activator CREBBP protein. The degradation of host CREBBP which is a key component of the IFN enhanceosome is likely responsible for the inhibition of interferon mediated by Nsp1-alpha. Also participates in the inhibition of host NF-kappa-B activation by counteracting LUBAC-dependent induction of NF-kappa-B. Reduces host NEMO ubiquitination by blocking the interaction between the two LUBAC complex components RNF31 and SHARPIN.</text>
</comment>
<comment type="function">
    <molecule>Nsp1-beta papain-like cysteine proteinase</molecule>
    <text evidence="5 6 14">Plays a role in blocking host mRNA nuclear export to the cytoplasm and subversion of host protein synthesis (By similarity). Additionally, inhibits the interferon-activated JAK/STAT signal transduction by mediating the ubiquitination and subsequent proteasomal degradation of host KPNA1 (By similarity). Repurposes the host antiviral stress granules into a proviral platform to counteract the EIF2AK2/PKR restriction, thereby regulating the host inflammatory response (PubMed:35858300).</text>
</comment>
<comment type="function">
    <molecule>Nsp2 cysteine proteinase</molecule>
    <text evidence="2">Multifunctional protein that acts as a viral protease and as a viral antagonist of host immune response. Cleaves the nsp2/nsp3 site in the viral polyprotein. Displays deubiquitinating activity that cleaves both ubiquitinated and ISGylated products and therefore inhibits ubiquitin and ISG15-dependent host innate immunity. Also deubiquinates host NFKBIA, thereby interfering with NFKBIA degradation and impairing subsequent NF-kappa-B activation.</text>
</comment>
<comment type="function">
    <molecule>Non-structural protein 3</molecule>
    <text evidence="5">Plays a role in the inhibition of the immune response by interacting with host IFITM1. This interaction leads to the proteasomal degradation of the IFN-induced antiviral protein IFITM1.</text>
</comment>
<comment type="function">
    <molecule>Serine protease nsp4</molecule>
    <text evidence="5">Cleaves the majority of cleavage sites present in the C-terminus of the polyprotein. Triggers host apoptosis through caspase-3, -8, and -9 activations. Subverts host innate immune responses through its protease activity. Targets the NF-kappa-B essential modulator NEMO and mediates its cleavage. Blocks host interferon beta induction and downstream signaling by cleaving mitochondrial MAVS, dislodging it from the mitochondria. Impairs host defense by cleaving host mRNA-decapping enzyme DCP1A to attenuate its antiviral activity.</text>
</comment>
<comment type="function">
    <molecule>Non-structural protein 5-6-7</molecule>
    <text evidence="5">Plays a role in the initial induction of autophagosomes from host endoplasmic reticulum.</text>
</comment>
<comment type="function">
    <molecule>Non-structural protein 5</molecule>
    <text evidence="5">Plays a role in the inhibition of host STAT3 signaling pathway by inducing the degradation of STAT3.</text>
</comment>
<comment type="function">
    <molecule>RNA-directed RNA polymerase</molecule>
    <text evidence="5">Responsible for replication and transcription of the viral RNA genome.</text>
</comment>
<comment type="function">
    <molecule>Helicase nsp10</molecule>
    <text evidence="5">Displays RNA and DNA duplex-unwinding activities with 5' to 3' polarity.</text>
</comment>
<comment type="function">
    <molecule>Uridylate-specific endoribonuclease nsp11</molecule>
    <text evidence="3 4 5">Plays a role in viral transcription/replication and prevents the simultaneous activation of host cell dsRNA sensors, such as MDA5/IFIH1, OAS, PKR (By similarity) and NLRP3 inflammasome (By similarity). Acts by degrading the 5'-polyuridines generated during replication of the poly(A) region of viral genomic and subgenomic RNAs. Catalyzes a two-step reaction in which a 2'3'-cyclic phosphate (2'3'-cP) is first generated by 2'-O transesterification, which is then hydrolyzed to a 3'-phosphate (3'-P) (By similarity). If not degraded, poly(U) RNA would hybridize with poly(A) RNA tails and activate host dsRNA sensors (By similarity). Also plays a role in the inhibition of host type I interferon production by recruiting host OTULIN to promote removal of linear ubiquitination targeting host NEMO (By similarity).</text>
</comment>
<comment type="catalytic activity">
    <molecule>RNA-directed RNA polymerase</molecule>
    <reaction evidence="8">
        <text>RNA(n) + a ribonucleoside 5'-triphosphate = RNA(n+1) + diphosphate</text>
        <dbReference type="Rhea" id="RHEA:21248"/>
        <dbReference type="Rhea" id="RHEA-COMP:14527"/>
        <dbReference type="Rhea" id="RHEA-COMP:17342"/>
        <dbReference type="ChEBI" id="CHEBI:33019"/>
        <dbReference type="ChEBI" id="CHEBI:61557"/>
        <dbReference type="ChEBI" id="CHEBI:140395"/>
        <dbReference type="EC" id="2.7.7.48"/>
    </reaction>
</comment>
<comment type="catalytic activity">
    <molecule>Helicase nsp10</molecule>
    <reaction>
        <text>ATP + H2O = ADP + phosphate + H(+)</text>
        <dbReference type="Rhea" id="RHEA:13065"/>
        <dbReference type="ChEBI" id="CHEBI:15377"/>
        <dbReference type="ChEBI" id="CHEBI:15378"/>
        <dbReference type="ChEBI" id="CHEBI:30616"/>
        <dbReference type="ChEBI" id="CHEBI:43474"/>
        <dbReference type="ChEBI" id="CHEBI:456216"/>
        <dbReference type="EC" id="3.6.4.12"/>
    </reaction>
</comment>
<comment type="catalytic activity">
    <molecule>Helicase nsp10</molecule>
    <reaction>
        <text>ATP + H2O = ADP + phosphate + H(+)</text>
        <dbReference type="Rhea" id="RHEA:13065"/>
        <dbReference type="ChEBI" id="CHEBI:15377"/>
        <dbReference type="ChEBI" id="CHEBI:15378"/>
        <dbReference type="ChEBI" id="CHEBI:30616"/>
        <dbReference type="ChEBI" id="CHEBI:43474"/>
        <dbReference type="ChEBI" id="CHEBI:456216"/>
        <dbReference type="EC" id="3.6.4.13"/>
    </reaction>
</comment>
<comment type="catalytic activity">
    <molecule>Nsp2 cysteine proteinase</molecule>
    <reaction>
        <text>Thiol-dependent hydrolysis of ester, thioester, amide, peptide and isopeptide bonds formed by the C-terminal Gly of ubiquitin (a 76-residue protein attached to proteins as an intracellular targeting signal).</text>
        <dbReference type="EC" id="3.4.19.12"/>
    </reaction>
</comment>
<comment type="catalytic activity">
    <molecule>Uridylate-specific endoribonuclease nsp11</molecule>
    <reaction evidence="4">
        <text>uridylyl-uridylyl-ribonucleotide-RNA = a 3'-end uridylyl-2',3'-cyclophospho-uridine-RNA + a 5'-end dephospho-ribonucleoside-RNA</text>
        <dbReference type="Rhea" id="RHEA:67732"/>
        <dbReference type="Rhea" id="RHEA-COMP:13936"/>
        <dbReference type="Rhea" id="RHEA-COMP:17334"/>
        <dbReference type="Rhea" id="RHEA-COMP:17335"/>
        <dbReference type="ChEBI" id="CHEBI:138284"/>
        <dbReference type="ChEBI" id="CHEBI:173079"/>
        <dbReference type="ChEBI" id="CHEBI:173080"/>
    </reaction>
</comment>
<comment type="subunit">
    <text evidence="5">Nsp1-alpha papain-like: Interacts with host RNF31.</text>
</comment>
<comment type="subunit">
    <molecule>Nsp1-beta papain-like cysteine proteinase</molecule>
    <text evidence="14">Interacts with host EIF2AK2; this interaction occurs in host stress granules and leads to EIF2AK2 inhibition (PubMed:35858300). Interacts with host G3BP1; this interaction probably plays a role in Nsp1-beta-mediated inhibition of host EIF2AK2 (PubMed:35858300).</text>
</comment>
<comment type="subunit">
    <molecule>Nsp2 cysteine proteinase</molecule>
    <text evidence="5">Interacts with host DDX18; this interaction redistributes host DDX18 to the cytoplasm.</text>
</comment>
<comment type="subunit">
    <molecule>Non-structural protein 3</molecule>
    <text evidence="5">Interacts with host IFITM1.</text>
</comment>
<comment type="subunit">
    <molecule>RNA-directed RNA polymerase</molecule>
    <text evidence="5">Interacts with host DDX5.</text>
</comment>
<comment type="subunit">
    <molecule>Helicase nsp10</molecule>
    <text evidence="5">Interacts with host DDX18; this interaction redistributes host DDX18 to the cytoplasm.</text>
</comment>
<comment type="subunit">
    <molecule>Uridylate-specific endoribonuclease nsp11</molecule>
    <text evidence="5">Interacts with host OTULIN.</text>
</comment>
<comment type="subunit">
    <molecule>Non-structural protein 12</molecule>
    <text evidence="5">Interacts with host LGALS3.</text>
</comment>
<comment type="interaction">
    <interactant intactId="EBI-16584543">
        <id>A6YQT5</id>
    </interactant>
    <interactant intactId="EBI-16367109">
        <id>K7GS49</id>
        <label>ILF2</label>
    </interactant>
    <organismsDiffer>true</organismsDiffer>
    <experiments>4</experiments>
</comment>
<comment type="subcellular location">
    <molecule>Nsp1</molecule>
    <subcellularLocation>
        <location evidence="5">Host nucleus</location>
    </subcellularLocation>
    <subcellularLocation>
        <location evidence="5">Host cytoplasm</location>
    </subcellularLocation>
</comment>
<comment type="subcellular location">
    <molecule>Nsp1-alpha papain-like cysteine proteinase</molecule>
    <subcellularLocation>
        <location evidence="5">Host nucleus</location>
    </subcellularLocation>
    <subcellularLocation>
        <location evidence="5">Host cytoplasm</location>
    </subcellularLocation>
</comment>
<comment type="subcellular location">
    <molecule>Nsp1-beta papain-like cysteine proteinase</molecule>
    <subcellularLocation>
        <location evidence="14">Host nucleus</location>
    </subcellularLocation>
    <subcellularLocation>
        <location evidence="14">Host cytoplasm</location>
    </subcellularLocation>
    <text evidence="14">Accumulates mainly in the host cytoplasm in early infection and then mostly in the host nucleus.</text>
</comment>
<comment type="subcellular location">
    <molecule>Nsp2 cysteine proteinase</molecule>
    <subcellularLocation>
        <location evidence="5">Host cytoplasm</location>
    </subcellularLocation>
    <subcellularLocation>
        <location evidence="5">Host membrane</location>
        <topology evidence="5">Multi-pass membrane protein</topology>
    </subcellularLocation>
</comment>
<comment type="subcellular location">
    <molecule>Non-structural protein 3</molecule>
    <subcellularLocation>
        <location evidence="5">Host membrane</location>
        <topology evidence="5">Multi-pass membrane protein</topology>
    </subcellularLocation>
</comment>
<comment type="subcellular location">
    <molecule>Non-structural protein 5-6-7</molecule>
    <subcellularLocation>
        <location evidence="5">Host endoplasmic reticulum</location>
    </subcellularLocation>
    <subcellularLocation>
        <location evidence="5">Host membrane</location>
        <topology evidence="5">Multi-pass membrane protein</topology>
    </subcellularLocation>
</comment>
<comment type="subcellular location">
    <molecule>Serine protease nsp4</molecule>
    <subcellularLocation>
        <location evidence="5">Host cytoplasm</location>
    </subcellularLocation>
</comment>
<comment type="subcellular location">
    <molecule>RNA-directed RNA polymerase</molecule>
    <subcellularLocation>
        <location evidence="5">Host cytoplasm</location>
    </subcellularLocation>
    <subcellularLocation>
        <location evidence="5">Host cytoplasm</location>
        <location evidence="5">Host perinuclear region</location>
    </subcellularLocation>
</comment>
<comment type="subcellular location">
    <molecule>Helicase nsp10</molecule>
    <subcellularLocation>
        <location evidence="5">Host cytoplasm</location>
    </subcellularLocation>
    <subcellularLocation>
        <location evidence="5">Host cytoplasm</location>
        <location evidence="5">Host perinuclear region</location>
    </subcellularLocation>
</comment>
<comment type="subcellular location">
    <molecule>Uridylate-specific endoribonuclease nsp11</molecule>
    <subcellularLocation>
        <location evidence="5">Host cytoplasm</location>
    </subcellularLocation>
    <subcellularLocation>
        <location evidence="5">Host nucleus</location>
    </subcellularLocation>
</comment>
<comment type="subcellular location">
    <molecule>Non-structural protein 12</molecule>
    <subcellularLocation>
        <location evidence="5">Host cytoplasm</location>
    </subcellularLocation>
</comment>
<comment type="alternative products">
    <event type="ribosomal frameshifting"/>
    <isoform>
        <id>A6YQT5-1</id>
        <name>Replicase polyprotein 1ab</name>
        <name>pp1ab</name>
        <sequence type="displayed"/>
    </isoform>
    <isoform>
        <id>A6YQT5-2</id>
        <name>Replicase polyprotein 1a</name>
        <name>pp1a</name>
        <name>ORF1a polyprotein</name>
        <sequence type="described" ref="VSP_062070"/>
    </isoform>
</comment>
<comment type="domain">
    <text evidence="1">The hydrophobic domains (HD) could mediate the membrane association of the replication complex and thereby alter the architecture of the host cell membrane.</text>
</comment>
<comment type="domain">
    <text evidence="1">The OTU-like region is responsible for the deubiquitinating and deISGylation activities of Nsp2.</text>
</comment>
<comment type="PTM">
    <molecule>Replicase polyprotein 1ab</molecule>
    <text evidence="6">Specific enzymatic cleavages in vivo by its own proteases yield mature proteins. Nsp1 is autocleaved into two subunits, Nsp1-alpha and Nsp1-beta. There are two alternative pathways for processing. Either nsp4-5 is cleaved, which represents the major pathway or the nsp5-6 and nsp6-7 are processed, which represents the minor pathway. The major pathway occurs when nsp2 acts as a cofactor for nsp4.</text>
</comment>
<comment type="miscellaneous">
    <molecule>Isoform Replicase polyprotein 1ab</molecule>
    <text evidence="5">Produced by -1 ribosomal frameshifting at the 1a-1b genes boundary.</text>
</comment>
<comment type="miscellaneous">
    <molecule>Isoform Replicase polyprotein 1a</molecule>
    <text evidence="5">Produced by conventional translation.</text>
</comment>
<comment type="similarity">
    <text evidence="15">Belongs to the arteriviridae polyprotein family.</text>
</comment>
<accession>A6YQT5</accession>
<accession>A6YQT6</accession>
<organismHost>
    <name type="scientific">Sus scrofa</name>
    <name type="common">Pig</name>
    <dbReference type="NCBI Taxonomy" id="9823"/>
</organismHost>
<reference key="1">
    <citation type="journal article" date="2009" name="J. Virol.">
        <title>The 30-amino-acid deletion in the Nsp2 of highly pathogenic porcine reproductive and respiratory syndrome virus emerging in China is not related to its virulence.</title>
        <authorList>
            <person name="Zhou L."/>
            <person name="Zhang J."/>
            <person name="Zeng J."/>
            <person name="Yin S."/>
            <person name="Li Y."/>
            <person name="Zheng L."/>
            <person name="Guo X."/>
            <person name="Ge X."/>
            <person name="Yang H."/>
        </authorList>
    </citation>
    <scope>NUCLEOTIDE SEQUENCE [GENOMIC DNA]</scope>
    <source>
        <strain>JXwn06</strain>
    </source>
</reference>
<reference key="2">
    <citation type="journal article" date="2022" name="Proc. Natl. Acad. Sci. U.S.A.">
        <title>Viral evasion of PKR restriction by reprogramming cellular stress granules.</title>
        <authorList>
            <person name="Gao P."/>
            <person name="Liu Y."/>
            <person name="Wang H."/>
            <person name="Chai Y."/>
            <person name="Weng W."/>
            <person name="Zhang Y."/>
            <person name="Zhou L."/>
            <person name="Ge X."/>
            <person name="Guo X."/>
            <person name="Han J."/>
            <person name="Yang H."/>
        </authorList>
    </citation>
    <scope>FUNCTION (NSP1-BETA PAPAIN-LIKE)</scope>
    <scope>MUTAGENESIS OF 196-GLY--LYS-198; 199-VAL-SER-200 AND 199-VAL--TRP-201</scope>
    <scope>SUBCELLULAR LOCATION (NSP1-BETA PAPAIN-LIKE)</scope>
    <scope>INTERACTION WITH HOST EIF2AK2 (NSP1-BETA PAPAIN-LIKE)</scope>
    <scope>INTERACTION WITH HOST G3BP1 (NSP1-BETA PAPAIN-LIKE)</scope>
    <source>
        <strain>JXwn06</strain>
    </source>
</reference>
<evidence type="ECO:0000250" key="1"/>
<evidence type="ECO:0000250" key="2">
    <source>
        <dbReference type="UniProtKB" id="A0MD28"/>
    </source>
</evidence>
<evidence type="ECO:0000250" key="3">
    <source>
        <dbReference type="UniProtKB" id="P0C6X7"/>
    </source>
</evidence>
<evidence type="ECO:0000250" key="4">
    <source>
        <dbReference type="UniProtKB" id="P19811"/>
    </source>
</evidence>
<evidence type="ECO:0000250" key="5">
    <source>
        <dbReference type="UniProtKB" id="Q04561"/>
    </source>
</evidence>
<evidence type="ECO:0000250" key="6">
    <source>
        <dbReference type="UniProtKB" id="Q9WJB2"/>
    </source>
</evidence>
<evidence type="ECO:0000255" key="7"/>
<evidence type="ECO:0000255" key="8">
    <source>
        <dbReference type="PROSITE-ProRule" id="PRU00539"/>
    </source>
</evidence>
<evidence type="ECO:0000255" key="9">
    <source>
        <dbReference type="PROSITE-ProRule" id="PRU00826"/>
    </source>
</evidence>
<evidence type="ECO:0000255" key="10">
    <source>
        <dbReference type="PROSITE-ProRule" id="PRU00871"/>
    </source>
</evidence>
<evidence type="ECO:0000255" key="11">
    <source>
        <dbReference type="PROSITE-ProRule" id="PRU00872"/>
    </source>
</evidence>
<evidence type="ECO:0000255" key="12">
    <source>
        <dbReference type="PROSITE-ProRule" id="PRU00873"/>
    </source>
</evidence>
<evidence type="ECO:0000256" key="13">
    <source>
        <dbReference type="SAM" id="MobiDB-lite"/>
    </source>
</evidence>
<evidence type="ECO:0000269" key="14">
    <source>
    </source>
</evidence>
<evidence type="ECO:0000305" key="15"/>
<feature type="chain" id="PRO_0000459191" description="Replicase polyprotein 1ab">
    <location>
        <begin position="1"/>
        <end position="3931"/>
    </location>
</feature>
<feature type="chain" id="PRO_0000459192" description="Nsp1">
    <location>
        <begin position="1"/>
        <end position="382"/>
    </location>
</feature>
<feature type="chain" id="PRO_0000459193" description="Nsp1-alpha papain-like cysteine proteinase">
    <location>
        <begin position="1"/>
        <end position="180"/>
    </location>
</feature>
<feature type="chain" id="PRO_0000459194" description="Nsp1-beta papain-like cysteine proteinase">
    <location>
        <begin position="181"/>
        <end position="383"/>
    </location>
</feature>
<feature type="chain" id="PRO_0000459195" description="Nsp2 cysteine proteinase">
    <location>
        <begin position="384"/>
        <end position="1549"/>
    </location>
</feature>
<feature type="chain" id="PRO_0000459196" description="Non-structural protein 3">
    <location>
        <begin position="1550"/>
        <end position="1779"/>
    </location>
</feature>
<feature type="chain" id="PRO_0000459197" description="Serine protease nsp4">
    <location>
        <begin position="1780"/>
        <end position="1983"/>
    </location>
</feature>
<feature type="chain" id="PRO_0000459198" description="Non-structural protein 5-6-7">
    <location>
        <begin position="1984"/>
        <end position="2428"/>
    </location>
</feature>
<feature type="chain" id="PRO_0000459199" description="Non-structural protein 5">
    <location>
        <begin position="1984"/>
        <end position="2153"/>
    </location>
</feature>
<feature type="chain" id="PRO_0000459200" description="Non-structural protein 6">
    <location>
        <begin position="2154"/>
        <end position="2169"/>
    </location>
</feature>
<feature type="chain" id="PRO_0000459201" description="Non-structural protein 7-alpha">
    <location>
        <begin position="2170"/>
        <end position="2318"/>
    </location>
</feature>
<feature type="chain" id="PRO_0000459202" description="Non-structural protein 7-beta">
    <location>
        <begin position="2319"/>
        <end position="2428"/>
    </location>
</feature>
<feature type="chain" id="PRO_0000459203" description="RNA-directed RNA polymerase">
    <location>
        <begin position="2429"/>
        <end position="3114"/>
    </location>
</feature>
<feature type="chain" id="PRO_0000459204" description="Non-structural protein 8">
    <location>
        <begin position="2429"/>
        <end position="2473"/>
    </location>
</feature>
<feature type="chain" id="PRO_0000459205" description="Helicase nsp10">
    <location>
        <begin position="3115"/>
        <end position="3555"/>
    </location>
</feature>
<feature type="chain" id="PRO_0000459206" description="Uridylate-specific endoribonuclease nsp11">
    <location>
        <begin position="3556"/>
        <end position="3778"/>
    </location>
</feature>
<feature type="chain" id="PRO_0000459207" description="Non-structural protein 12">
    <location>
        <begin position="3779"/>
        <end position="3931"/>
    </location>
</feature>
<feature type="transmembrane region" description="Helical" evidence="7">
    <location>
        <begin position="1221"/>
        <end position="1241"/>
    </location>
</feature>
<feature type="transmembrane region" description="Helical" evidence="7">
    <location>
        <begin position="1266"/>
        <end position="1286"/>
    </location>
</feature>
<feature type="transmembrane region" description="Helical" evidence="7">
    <location>
        <begin position="1339"/>
        <end position="1359"/>
    </location>
</feature>
<feature type="transmembrane region" description="Helical" evidence="7">
    <location>
        <begin position="1554"/>
        <end position="1574"/>
    </location>
</feature>
<feature type="transmembrane region" description="Helical" evidence="7">
    <location>
        <begin position="1607"/>
        <end position="1627"/>
    </location>
</feature>
<feature type="transmembrane region" description="Helical" evidence="7">
    <location>
        <begin position="1629"/>
        <end position="1649"/>
    </location>
</feature>
<feature type="transmembrane region" description="Helical" evidence="7">
    <location>
        <begin position="1659"/>
        <end position="1679"/>
    </location>
</feature>
<feature type="transmembrane region" description="Helical" evidence="7">
    <location>
        <begin position="1695"/>
        <end position="1715"/>
    </location>
</feature>
<feature type="transmembrane region" description="Helical" evidence="7">
    <location>
        <begin position="2006"/>
        <end position="2026"/>
    </location>
</feature>
<feature type="transmembrane region" description="Helical" evidence="7">
    <location>
        <begin position="2030"/>
        <end position="2050"/>
    </location>
</feature>
<feature type="transmembrane region" description="Helical" evidence="7">
    <location>
        <begin position="2064"/>
        <end position="2084"/>
    </location>
</feature>
<feature type="transmembrane region" description="Helical" evidence="7">
    <location>
        <begin position="2107"/>
        <end position="2127"/>
    </location>
</feature>
<feature type="domain" description="Peptidase C33" evidence="10">
    <location>
        <begin position="428"/>
        <end position="536"/>
    </location>
</feature>
<feature type="zinc finger region" description="C4-type; atypical" evidence="5">
    <location>
        <begin position="8"/>
        <end position="28"/>
    </location>
</feature>
<feature type="region of interest" description="PCP1-alpha" evidence="5">
    <location>
        <begin position="69"/>
        <end position="182"/>
    </location>
</feature>
<feature type="region of interest" description="Important for host EIF2AK2 inhibition" evidence="14">
    <location>
        <begin position="199"/>
        <end position="200"/>
    </location>
</feature>
<feature type="region of interest" description="OTU-like" evidence="5">
    <location>
        <begin position="426"/>
        <end position="513"/>
    </location>
</feature>
<feature type="region of interest" description="Disordered" evidence="13">
    <location>
        <begin position="809"/>
        <end position="868"/>
    </location>
</feature>
<feature type="region of interest" description="Disordered" evidence="13">
    <location>
        <begin position="1118"/>
        <end position="1164"/>
    </location>
</feature>
<feature type="region of interest" description="HD1" evidence="5">
    <location>
        <begin position="1236"/>
        <end position="1359"/>
    </location>
</feature>
<feature type="region of interest" description="WCCH" evidence="5">
    <location>
        <begin position="1414"/>
        <end position="1438"/>
    </location>
</feature>
<feature type="region of interest" description="HD2" evidence="5">
    <location>
        <begin position="1554"/>
        <end position="1715"/>
    </location>
</feature>
<feature type="region of interest" description="HD3" evidence="5">
    <location>
        <begin position="2006"/>
        <end position="2127"/>
    </location>
</feature>
<feature type="compositionally biased region" description="Pro residues" evidence="13">
    <location>
        <begin position="810"/>
        <end position="819"/>
    </location>
</feature>
<feature type="compositionally biased region" description="Basic and acidic residues" evidence="13">
    <location>
        <begin position="1139"/>
        <end position="1151"/>
    </location>
</feature>
<feature type="active site" description="For nsp1-alpha papain-like cysteine proteinase activity" evidence="5 11">
    <location>
        <position position="76"/>
    </location>
</feature>
<feature type="active site" description="For nsp1-alpha papain-like cysteine proteinase activity" evidence="5 11">
    <location>
        <position position="146"/>
    </location>
</feature>
<feature type="active site" description="For nsp1-beta papain-like cysteine proteinase activity" evidence="5 12">
    <location>
        <position position="270"/>
    </location>
</feature>
<feature type="active site" description="For nsp1-beta papain-like cysteine proteinase activity" evidence="5 12">
    <location>
        <position position="339"/>
    </location>
</feature>
<feature type="active site" description="For nsp2 cysteine proteinase activity" evidence="10">
    <location>
        <position position="437"/>
    </location>
</feature>
<feature type="active site" description="For nsp2 cysteine proteinase activity" evidence="10">
    <location>
        <position position="506"/>
    </location>
</feature>
<feature type="active site" description="Charge relay system; for serine protease nsp4 activity" evidence="5 9">
    <location>
        <position position="1818"/>
    </location>
</feature>
<feature type="active site" description="Charge relay system; for serine protease nsp4 activity" evidence="5 9">
    <location>
        <position position="1843"/>
    </location>
</feature>
<feature type="active site" description="Charge relay system; for serine protease nsp4 activity" evidence="5 9">
    <location>
        <position position="1897"/>
    </location>
</feature>
<feature type="site" description="Cleavage; by autolysis" evidence="6">
    <location>
        <begin position="180"/>
        <end position="181"/>
    </location>
</feature>
<feature type="site" description="Cleavage; by CP2" evidence="2">
    <location>
        <begin position="1549"/>
        <end position="1550"/>
    </location>
</feature>
<feature type="site" description="Cleavage; by 3CLSP" evidence="2">
    <location>
        <begin position="1779"/>
        <end position="1780"/>
    </location>
</feature>
<feature type="site" description="Cleavage; by 3CLSP" evidence="2">
    <location>
        <begin position="1983"/>
        <end position="1984"/>
    </location>
</feature>
<feature type="site" description="Cleavage; by 3CLSP" evidence="2">
    <location>
        <begin position="2153"/>
        <end position="2154"/>
    </location>
</feature>
<feature type="site" description="Cleavage; by 3CLSP" evidence="2">
    <location>
        <begin position="2169"/>
        <end position="2170"/>
    </location>
</feature>
<feature type="site" description="Cleavage; by 3CLSP" evidence="2">
    <location>
        <begin position="2318"/>
        <end position="2319"/>
    </location>
</feature>
<feature type="site" description="Cleavage; by 3CLSP" evidence="2">
    <location>
        <begin position="2428"/>
        <end position="2429"/>
    </location>
</feature>
<feature type="site" description="Cleavage; by 3CLSP" evidence="2">
    <location>
        <begin position="2473"/>
        <end position="2474"/>
    </location>
</feature>
<feature type="site" description="Cleavage; by 3CLSP" evidence="2">
    <location>
        <begin position="3114"/>
        <end position="3115"/>
    </location>
</feature>
<feature type="splice variant" id="VSP_062070" description="In isoform Replicase polyprotein 1a.">
    <location>
        <begin position="2474"/>
        <end position="3931"/>
    </location>
</feature>
<feature type="mutagenesis site" description="Complete loss of host EIF2AK2 phosphorylation. No effect on the interaction with host EIF2AK2." evidence="14">
    <original>GGK</original>
    <variation>AAA</variation>
    <location>
        <begin position="196"/>
        <end position="198"/>
    </location>
</feature>
<feature type="mutagenesis site" description="Complete loss of localization to stress granules." evidence="14">
    <original>VSW</original>
    <variation>AAA</variation>
    <location>
        <begin position="199"/>
        <end position="201"/>
    </location>
</feature>
<feature type="mutagenesis site" description="Complete loss of interaction with host G3BP1 or EIF2AK2." evidence="14">
    <original>VSW</original>
    <variation>GGG</variation>
    <location>
        <begin position="199"/>
        <end position="201"/>
    </location>
</feature>
<feature type="mutagenesis site" description="Complete loss of interaction with host G3BP1 or EIF2AK2. Increased levels of host EIF2AK2 phosphorylation." evidence="14">
    <original>VS</original>
    <variation>GG</variation>
    <location>
        <begin position="199"/>
        <end position="200"/>
    </location>
</feature>
<protein>
    <recommendedName>
        <fullName>Replicase polyprotein 1ab</fullName>
    </recommendedName>
    <alternativeName>
        <fullName>ORF1ab polyprotein</fullName>
    </alternativeName>
    <component>
        <recommendedName>
            <fullName>Nsp1</fullName>
            <ecNumber>3.4.22.-</ecNumber>
        </recommendedName>
    </component>
    <component>
        <recommendedName>
            <fullName>Nsp1-alpha papain-like cysteine proteinase</fullName>
            <ecNumber>3.4.22.-</ecNumber>
        </recommendedName>
        <alternativeName>
            <fullName>PCP1-alpha</fullName>
        </alternativeName>
    </component>
    <component>
        <recommendedName>
            <fullName>Nsp1-beta papain-like cysteine proteinase</fullName>
            <ecNumber>3.4.22.-</ecNumber>
        </recommendedName>
        <alternativeName>
            <fullName>PCP1-beta</fullName>
        </alternativeName>
    </component>
    <component>
        <recommendedName>
            <fullName>Nsp2 cysteine proteinase</fullName>
            <ecNumber>3.4.19.12</ecNumber>
            <ecNumber>3.4.22.-</ecNumber>
        </recommendedName>
        <alternativeName>
            <fullName>CP2</fullName>
            <shortName>CP</shortName>
        </alternativeName>
    </component>
    <component>
        <recommendedName>
            <fullName>Non-structural protein 3</fullName>
            <shortName>Nsp3</shortName>
        </recommendedName>
    </component>
    <component>
        <recommendedName>
            <fullName>Serine protease nsp4</fullName>
            <shortName>3CLSP</shortName>
            <ecNumber>3.4.21.-</ecNumber>
        </recommendedName>
        <alternativeName>
            <fullName>3C-like serine proteinase</fullName>
        </alternativeName>
        <alternativeName>
            <fullName>Nsp4</fullName>
        </alternativeName>
    </component>
    <component>
        <recommendedName>
            <fullName>Non-structural protein 5-6-7</fullName>
            <shortName>Nsp5-6-7</shortName>
        </recommendedName>
    </component>
    <component>
        <recommendedName>
            <fullName>Non-structural protein 5</fullName>
            <shortName>Nsp5</shortName>
        </recommendedName>
    </component>
    <component>
        <recommendedName>
            <fullName>Non-structural protein 6</fullName>
            <shortName>Nsp6</shortName>
        </recommendedName>
    </component>
    <component>
        <recommendedName>
            <fullName>Non-structural protein 7-alpha</fullName>
            <shortName>Nsp7-alpha</shortName>
        </recommendedName>
    </component>
    <component>
        <recommendedName>
            <fullName>Non-structural protein 7-beta</fullName>
            <shortName>Nsp7-beta</shortName>
        </recommendedName>
    </component>
    <component>
        <recommendedName>
            <fullName>Non-structural protein 8</fullName>
            <shortName>Nsp8</shortName>
        </recommendedName>
    </component>
    <component>
        <recommendedName>
            <fullName>RNA-directed RNA polymerase</fullName>
            <shortName>Pol</shortName>
            <shortName>RdRp</shortName>
            <ecNumber>2.7.7.48</ecNumber>
        </recommendedName>
        <alternativeName>
            <fullName>Nsp9</fullName>
        </alternativeName>
    </component>
    <component>
        <recommendedName>
            <fullName>Helicase nsp10</fullName>
            <shortName>Hel</shortName>
            <ecNumber>3.6.4.12</ecNumber>
            <ecNumber>3.6.4.13</ecNumber>
        </recommendedName>
        <alternativeName>
            <fullName>Nsp10</fullName>
        </alternativeName>
    </component>
    <component>
        <recommendedName>
            <fullName>Uridylate-specific endoribonuclease nsp11</fullName>
            <ecNumber>4.6.1.-</ecNumber>
        </recommendedName>
        <alternativeName>
            <fullName>Non-structural protein 11</fullName>
            <shortName>Nsp11</shortName>
        </alternativeName>
    </component>
    <component>
        <recommendedName>
            <fullName>Non-structural protein 12</fullName>
            <shortName>Nsp12</shortName>
        </recommendedName>
    </component>
</protein>
<name>RPOA_PRRSV</name>
<dbReference type="EC" id="3.4.22.-"/>
<dbReference type="EC" id="3.4.19.12"/>
<dbReference type="EC" id="3.4.21.-"/>
<dbReference type="EC" id="2.7.7.48"/>
<dbReference type="EC" id="3.6.4.12"/>
<dbReference type="EC" id="3.6.4.13"/>
<dbReference type="EC" id="4.6.1.-"/>
<dbReference type="EMBL" id="EF641008">
    <property type="protein sequence ID" value="ABR37297.1"/>
    <property type="molecule type" value="Genomic_RNA"/>
</dbReference>
<dbReference type="EMBL" id="EF641008">
    <property type="protein sequence ID" value="ABR37298.1"/>
    <property type="status" value="ALT_SEQ"/>
    <property type="molecule type" value="Genomic_RNA"/>
</dbReference>
<dbReference type="SMR" id="A6YQT5"/>
<dbReference type="IntAct" id="A6YQT5">
    <property type="interactions" value="1"/>
</dbReference>
<dbReference type="MEROPS" id="S32.002"/>
<dbReference type="Proteomes" id="UP000102082">
    <property type="component" value="Genome"/>
</dbReference>
<dbReference type="GO" id="GO:0044165">
    <property type="term" value="C:host cell endoplasmic reticulum"/>
    <property type="evidence" value="ECO:0007669"/>
    <property type="project" value="UniProtKB-SubCell"/>
</dbReference>
<dbReference type="GO" id="GO:0033644">
    <property type="term" value="C:host cell membrane"/>
    <property type="evidence" value="ECO:0007669"/>
    <property type="project" value="UniProtKB-SubCell"/>
</dbReference>
<dbReference type="GO" id="GO:0042025">
    <property type="term" value="C:host cell nucleus"/>
    <property type="evidence" value="ECO:0007669"/>
    <property type="project" value="UniProtKB-SubCell"/>
</dbReference>
<dbReference type="GO" id="GO:0044220">
    <property type="term" value="C:host cell perinuclear region of cytoplasm"/>
    <property type="evidence" value="ECO:0007669"/>
    <property type="project" value="UniProtKB-SubCell"/>
</dbReference>
<dbReference type="GO" id="GO:0016020">
    <property type="term" value="C:membrane"/>
    <property type="evidence" value="ECO:0007669"/>
    <property type="project" value="UniProtKB-KW"/>
</dbReference>
<dbReference type="GO" id="GO:0005524">
    <property type="term" value="F:ATP binding"/>
    <property type="evidence" value="ECO:0007669"/>
    <property type="project" value="UniProtKB-KW"/>
</dbReference>
<dbReference type="GO" id="GO:0004197">
    <property type="term" value="F:cysteine-type endopeptidase activity"/>
    <property type="evidence" value="ECO:0007669"/>
    <property type="project" value="InterPro"/>
</dbReference>
<dbReference type="GO" id="GO:0004519">
    <property type="term" value="F:endonuclease activity"/>
    <property type="evidence" value="ECO:0007669"/>
    <property type="project" value="UniProtKB-KW"/>
</dbReference>
<dbReference type="GO" id="GO:0016829">
    <property type="term" value="F:lyase activity"/>
    <property type="evidence" value="ECO:0007669"/>
    <property type="project" value="UniProtKB-KW"/>
</dbReference>
<dbReference type="GO" id="GO:0030291">
    <property type="term" value="F:protein serine/threonine kinase inhibitor activity"/>
    <property type="evidence" value="ECO:0007669"/>
    <property type="project" value="UniProtKB-KW"/>
</dbReference>
<dbReference type="GO" id="GO:0003723">
    <property type="term" value="F:RNA binding"/>
    <property type="evidence" value="ECO:0007669"/>
    <property type="project" value="InterPro"/>
</dbReference>
<dbReference type="GO" id="GO:0003724">
    <property type="term" value="F:RNA helicase activity"/>
    <property type="evidence" value="ECO:0007669"/>
    <property type="project" value="UniProtKB-EC"/>
</dbReference>
<dbReference type="GO" id="GO:0004540">
    <property type="term" value="F:RNA nuclease activity"/>
    <property type="evidence" value="ECO:0007669"/>
    <property type="project" value="UniProtKB-ARBA"/>
</dbReference>
<dbReference type="GO" id="GO:0003968">
    <property type="term" value="F:RNA-directed RNA polymerase activity"/>
    <property type="evidence" value="ECO:0007669"/>
    <property type="project" value="UniProtKB-KW"/>
</dbReference>
<dbReference type="GO" id="GO:0004252">
    <property type="term" value="F:serine-type endopeptidase activity"/>
    <property type="evidence" value="ECO:0007669"/>
    <property type="project" value="InterPro"/>
</dbReference>
<dbReference type="GO" id="GO:0008270">
    <property type="term" value="F:zinc ion binding"/>
    <property type="evidence" value="ECO:0007669"/>
    <property type="project" value="UniProtKB-KW"/>
</dbReference>
<dbReference type="GO" id="GO:0006351">
    <property type="term" value="P:DNA-templated transcription"/>
    <property type="evidence" value="ECO:0007669"/>
    <property type="project" value="InterPro"/>
</dbReference>
<dbReference type="GO" id="GO:0006508">
    <property type="term" value="P:proteolysis"/>
    <property type="evidence" value="ECO:0007669"/>
    <property type="project" value="UniProtKB-KW"/>
</dbReference>
<dbReference type="GO" id="GO:0039520">
    <property type="term" value="P:symbiont-mediated activation of host autophagy"/>
    <property type="evidence" value="ECO:0007669"/>
    <property type="project" value="UniProtKB-KW"/>
</dbReference>
<dbReference type="GO" id="GO:0039648">
    <property type="term" value="P:symbiont-mediated perturbation of host ubiquitin-like protein modification"/>
    <property type="evidence" value="ECO:0007669"/>
    <property type="project" value="UniProtKB-KW"/>
</dbReference>
<dbReference type="GO" id="GO:0039579">
    <property type="term" value="P:symbiont-mediated suppression of host ISG15-protein conjugation"/>
    <property type="evidence" value="ECO:0007669"/>
    <property type="project" value="UniProtKB-KW"/>
</dbReference>
<dbReference type="GO" id="GO:0039563">
    <property type="term" value="P:symbiont-mediated suppression of host JAK-STAT cascade via inhibition of STAT1 activity"/>
    <property type="evidence" value="ECO:0007669"/>
    <property type="project" value="UniProtKB-KW"/>
</dbReference>
<dbReference type="GO" id="GO:0085034">
    <property type="term" value="P:symbiont-mediated suppression of host NF-kappaB cascade"/>
    <property type="evidence" value="ECO:0007669"/>
    <property type="project" value="UniProtKB-KW"/>
</dbReference>
<dbReference type="GO" id="GO:0039580">
    <property type="term" value="P:symbiont-mediated suppression of host PKR/eIFalpha signaling"/>
    <property type="evidence" value="ECO:0007669"/>
    <property type="project" value="UniProtKB-KW"/>
</dbReference>
<dbReference type="GO" id="GO:0039502">
    <property type="term" value="P:symbiont-mediated suppression of host type I interferon-mediated signaling pathway"/>
    <property type="evidence" value="ECO:0007669"/>
    <property type="project" value="UniProtKB-KW"/>
</dbReference>
<dbReference type="GO" id="GO:0019082">
    <property type="term" value="P:viral protein processing"/>
    <property type="evidence" value="ECO:0007669"/>
    <property type="project" value="InterPro"/>
</dbReference>
<dbReference type="GO" id="GO:0039694">
    <property type="term" value="P:viral RNA genome replication"/>
    <property type="evidence" value="ECO:0007669"/>
    <property type="project" value="InterPro"/>
</dbReference>
<dbReference type="GO" id="GO:0075523">
    <property type="term" value="P:viral translational frameshifting"/>
    <property type="evidence" value="ECO:0007669"/>
    <property type="project" value="UniProtKB-KW"/>
</dbReference>
<dbReference type="CDD" id="cd21410">
    <property type="entry name" value="1B_av_Nsp10-like"/>
    <property type="match status" value="1"/>
</dbReference>
<dbReference type="CDD" id="cd23189">
    <property type="entry name" value="Arteriviridae_RdRp"/>
    <property type="match status" value="1"/>
</dbReference>
<dbReference type="CDD" id="cd22528">
    <property type="entry name" value="av_Nsp3_ER-remodelling"/>
    <property type="match status" value="1"/>
</dbReference>
<dbReference type="CDD" id="cd17937">
    <property type="entry name" value="DEXXYc_viral_SF1-N"/>
    <property type="match status" value="1"/>
</dbReference>
<dbReference type="CDD" id="cd21160">
    <property type="entry name" value="NendoU_av_Nsp11-like"/>
    <property type="match status" value="1"/>
</dbReference>
<dbReference type="CDD" id="cd21166">
    <property type="entry name" value="NTD_av_Nsp11-like"/>
    <property type="match status" value="1"/>
</dbReference>
<dbReference type="CDD" id="cd18786">
    <property type="entry name" value="SF1_C"/>
    <property type="match status" value="1"/>
</dbReference>
<dbReference type="CDD" id="cd21405">
    <property type="entry name" value="ZBD_av_Nsp10-like"/>
    <property type="match status" value="1"/>
</dbReference>
<dbReference type="Gene3D" id="3.90.70.160">
    <property type="match status" value="1"/>
</dbReference>
<dbReference type="Gene3D" id="4.10.80.390">
    <property type="match status" value="1"/>
</dbReference>
<dbReference type="Gene3D" id="3.30.1330.220">
    <property type="entry name" value="Arterivirus nonstructural protein 7 alpha"/>
    <property type="match status" value="1"/>
</dbReference>
<dbReference type="Gene3D" id="2.30.31.30">
    <property type="entry name" value="Arterivirus nps1beta, nuclease domain"/>
    <property type="match status" value="1"/>
</dbReference>
<dbReference type="Gene3D" id="3.90.70.70">
    <property type="entry name" value="Arterivirus papain-like cysteine protease beta domain"/>
    <property type="match status" value="1"/>
</dbReference>
<dbReference type="Gene3D" id="3.30.40.20">
    <property type="entry name" value="Chymotrypsin-like serine protease, domain 3"/>
    <property type="match status" value="1"/>
</dbReference>
<dbReference type="Gene3D" id="3.40.50.300">
    <property type="entry name" value="P-loop containing nucleotide triphosphate hydrolases"/>
    <property type="match status" value="2"/>
</dbReference>
<dbReference type="Gene3D" id="3.90.70.60">
    <property type="entry name" value="Porcine arterivirus-type cysteine proteinase alpha domain"/>
    <property type="match status" value="1"/>
</dbReference>
<dbReference type="Gene3D" id="2.40.10.10">
    <property type="entry name" value="Trypsin-like serine proteases"/>
    <property type="match status" value="2"/>
</dbReference>
<dbReference type="InterPro" id="IPR027351">
    <property type="entry name" value="(+)RNA_virus_helicase_core_dom"/>
</dbReference>
<dbReference type="InterPro" id="IPR031932">
    <property type="entry name" value="Arteri_nsp7a"/>
</dbReference>
<dbReference type="InterPro" id="IPR038451">
    <property type="entry name" value="Arteri_nsp7a_sf"/>
</dbReference>
<dbReference type="InterPro" id="IPR008743">
    <property type="entry name" value="Arterivirus_Nsp2_C33"/>
</dbReference>
<dbReference type="InterPro" id="IPR023338">
    <property type="entry name" value="Arterivirus_NSP4_peptidase"/>
</dbReference>
<dbReference type="InterPro" id="IPR046440">
    <property type="entry name" value="AV_NSP11N_COV_NSP15M"/>
</dbReference>
<dbReference type="InterPro" id="IPR008741">
    <property type="entry name" value="AV_PCPalpha"/>
</dbReference>
<dbReference type="InterPro" id="IPR038155">
    <property type="entry name" value="AV_PCPalpha_sf"/>
</dbReference>
<dbReference type="InterPro" id="IPR025773">
    <property type="entry name" value="AV_PCPbeta"/>
</dbReference>
<dbReference type="InterPro" id="IPR038154">
    <property type="entry name" value="AV_PCPbeta_sf"/>
</dbReference>
<dbReference type="InterPro" id="IPR023183">
    <property type="entry name" value="Chymotrypsin-like_C"/>
</dbReference>
<dbReference type="InterPro" id="IPR043502">
    <property type="entry name" value="DNA/RNA_pol_sf"/>
</dbReference>
<dbReference type="InterPro" id="IPR008760">
    <property type="entry name" value="EAV_peptidase_S32"/>
</dbReference>
<dbReference type="InterPro" id="IPR037227">
    <property type="entry name" value="EndoU-like"/>
</dbReference>
<dbReference type="InterPro" id="IPR043609">
    <property type="entry name" value="NendoU_nidovirus"/>
</dbReference>
<dbReference type="InterPro" id="IPR044863">
    <property type="entry name" value="NIRAN"/>
</dbReference>
<dbReference type="InterPro" id="IPR044348">
    <property type="entry name" value="NSP10_1B_Av"/>
</dbReference>
<dbReference type="InterPro" id="IPR027355">
    <property type="entry name" value="NSP10_Av_ZBD"/>
</dbReference>
<dbReference type="InterPro" id="IPR044320">
    <property type="entry name" value="NSP11_Av_N"/>
</dbReference>
<dbReference type="InterPro" id="IPR044314">
    <property type="entry name" value="NSP11_NendoU_Av"/>
</dbReference>
<dbReference type="InterPro" id="IPR054104">
    <property type="entry name" value="Nsp1alpha_Znf"/>
</dbReference>
<dbReference type="InterPro" id="IPR032855">
    <property type="entry name" value="NSP2-B_epitope"/>
</dbReference>
<dbReference type="InterPro" id="IPR027417">
    <property type="entry name" value="P-loop_NTPase"/>
</dbReference>
<dbReference type="InterPro" id="IPR032785">
    <property type="entry name" value="Pdase_C33_assoc"/>
</dbReference>
<dbReference type="InterPro" id="IPR009003">
    <property type="entry name" value="Peptidase_S1_PA"/>
</dbReference>
<dbReference type="InterPro" id="IPR043504">
    <property type="entry name" value="Peptidase_S1_PA_chymotrypsin"/>
</dbReference>
<dbReference type="InterPro" id="IPR001205">
    <property type="entry name" value="RNA-dir_pol_C"/>
</dbReference>
<dbReference type="InterPro" id="IPR007094">
    <property type="entry name" value="RNA-dir_pol_PSvirus"/>
</dbReference>
<dbReference type="Pfam" id="PF16749">
    <property type="entry name" value="Arteri_nsp7a"/>
    <property type="match status" value="1"/>
</dbReference>
<dbReference type="Pfam" id="PF19215">
    <property type="entry name" value="CoV_NSP15_C"/>
    <property type="match status" value="1"/>
</dbReference>
<dbReference type="Pfam" id="PF14757">
    <property type="entry name" value="NSP2-B_epitope"/>
    <property type="match status" value="2"/>
</dbReference>
<dbReference type="Pfam" id="PF14756">
    <property type="entry name" value="Pdase_C33_assoc"/>
    <property type="match status" value="1"/>
</dbReference>
<dbReference type="Pfam" id="PF05410">
    <property type="entry name" value="Peptidase_C31"/>
    <property type="match status" value="1"/>
</dbReference>
<dbReference type="Pfam" id="PF05411">
    <property type="entry name" value="Peptidase_C32"/>
    <property type="match status" value="1"/>
</dbReference>
<dbReference type="Pfam" id="PF05412">
    <property type="entry name" value="Peptidase_C33"/>
    <property type="match status" value="1"/>
</dbReference>
<dbReference type="Pfam" id="PF05579">
    <property type="entry name" value="Peptidase_S32"/>
    <property type="match status" value="1"/>
</dbReference>
<dbReference type="Pfam" id="PF22049">
    <property type="entry name" value="PRRSV-NSP11_N"/>
    <property type="match status" value="1"/>
</dbReference>
<dbReference type="Pfam" id="PF00680">
    <property type="entry name" value="RdRP_1"/>
    <property type="match status" value="1"/>
</dbReference>
<dbReference type="Pfam" id="PF01443">
    <property type="entry name" value="Viral_helicase1"/>
    <property type="match status" value="1"/>
</dbReference>
<dbReference type="Pfam" id="PF21905">
    <property type="entry name" value="Zf-Nsp1alpha"/>
    <property type="match status" value="1"/>
</dbReference>
<dbReference type="SUPFAM" id="SSF56672">
    <property type="entry name" value="DNA/RNA polymerases"/>
    <property type="match status" value="1"/>
</dbReference>
<dbReference type="SUPFAM" id="SSF142877">
    <property type="entry name" value="EndoU-like"/>
    <property type="match status" value="1"/>
</dbReference>
<dbReference type="SUPFAM" id="SSF52540">
    <property type="entry name" value="P-loop containing nucleoside triphosphate hydrolases"/>
    <property type="match status" value="2"/>
</dbReference>
<dbReference type="SUPFAM" id="SSF50494">
    <property type="entry name" value="Trypsin-like serine proteases"/>
    <property type="match status" value="1"/>
</dbReference>
<dbReference type="PROSITE" id="PS51538">
    <property type="entry name" value="AV_CP"/>
    <property type="match status" value="1"/>
</dbReference>
<dbReference type="PROSITE" id="PS51493">
    <property type="entry name" value="AV_NSP4_PRO"/>
    <property type="match status" value="1"/>
</dbReference>
<dbReference type="PROSITE" id="PS51539">
    <property type="entry name" value="AV_PCP_ALPHA"/>
    <property type="match status" value="1"/>
</dbReference>
<dbReference type="PROSITE" id="PS51540">
    <property type="entry name" value="AV_PCP_BETA"/>
    <property type="match status" value="1"/>
</dbReference>